<protein>
    <recommendedName>
        <fullName evidence="1">Shikimate dehydrogenase (NADP(+))</fullName>
        <shortName evidence="1">SDH</shortName>
        <ecNumber evidence="1">1.1.1.25</ecNumber>
    </recommendedName>
</protein>
<keyword id="KW-0028">Amino-acid biosynthesis</keyword>
<keyword id="KW-0057">Aromatic amino acid biosynthesis</keyword>
<keyword id="KW-0521">NADP</keyword>
<keyword id="KW-0560">Oxidoreductase</keyword>
<comment type="function">
    <text evidence="1">Involved in the biosynthesis of the chorismate, which leads to the biosynthesis of aromatic amino acids. Catalyzes the reversible NADPH linked reduction of 3-dehydroshikimate (DHSA) to yield shikimate (SA).</text>
</comment>
<comment type="catalytic activity">
    <reaction evidence="1">
        <text>shikimate + NADP(+) = 3-dehydroshikimate + NADPH + H(+)</text>
        <dbReference type="Rhea" id="RHEA:17737"/>
        <dbReference type="ChEBI" id="CHEBI:15378"/>
        <dbReference type="ChEBI" id="CHEBI:16630"/>
        <dbReference type="ChEBI" id="CHEBI:36208"/>
        <dbReference type="ChEBI" id="CHEBI:57783"/>
        <dbReference type="ChEBI" id="CHEBI:58349"/>
        <dbReference type="EC" id="1.1.1.25"/>
    </reaction>
</comment>
<comment type="pathway">
    <text evidence="1">Metabolic intermediate biosynthesis; chorismate biosynthesis; chorismate from D-erythrose 4-phosphate and phosphoenolpyruvate: step 4/7.</text>
</comment>
<comment type="subunit">
    <text evidence="1">Homodimer.</text>
</comment>
<comment type="similarity">
    <text evidence="1">Belongs to the shikimate dehydrogenase family.</text>
</comment>
<organism>
    <name type="scientific">Methanococcus maripaludis (strain C6 / ATCC BAA-1332)</name>
    <dbReference type="NCBI Taxonomy" id="444158"/>
    <lineage>
        <taxon>Archaea</taxon>
        <taxon>Methanobacteriati</taxon>
        <taxon>Methanobacteriota</taxon>
        <taxon>Methanomada group</taxon>
        <taxon>Methanococci</taxon>
        <taxon>Methanococcales</taxon>
        <taxon>Methanococcaceae</taxon>
        <taxon>Methanococcus</taxon>
    </lineage>
</organism>
<gene>
    <name evidence="1" type="primary">aroE</name>
    <name type="ordered locus">MmarC6_1719</name>
</gene>
<name>AROE_METM6</name>
<accession>A9AB08</accession>
<evidence type="ECO:0000255" key="1">
    <source>
        <dbReference type="HAMAP-Rule" id="MF_00222"/>
    </source>
</evidence>
<feature type="chain" id="PRO_1000100126" description="Shikimate dehydrogenase (NADP(+))">
    <location>
        <begin position="1"/>
        <end position="279"/>
    </location>
</feature>
<feature type="active site" description="Proton acceptor" evidence="1">
    <location>
        <position position="70"/>
    </location>
</feature>
<feature type="binding site" evidence="1">
    <location>
        <begin position="19"/>
        <end position="21"/>
    </location>
    <ligand>
        <name>shikimate</name>
        <dbReference type="ChEBI" id="CHEBI:36208"/>
    </ligand>
</feature>
<feature type="binding site" evidence="1">
    <location>
        <position position="66"/>
    </location>
    <ligand>
        <name>shikimate</name>
        <dbReference type="ChEBI" id="CHEBI:36208"/>
    </ligand>
</feature>
<feature type="binding site" evidence="1">
    <location>
        <position position="82"/>
    </location>
    <ligand>
        <name>NADP(+)</name>
        <dbReference type="ChEBI" id="CHEBI:58349"/>
    </ligand>
</feature>
<feature type="binding site" evidence="1">
    <location>
        <position position="91"/>
    </location>
    <ligand>
        <name>shikimate</name>
        <dbReference type="ChEBI" id="CHEBI:36208"/>
    </ligand>
</feature>
<feature type="binding site" evidence="1">
    <location>
        <position position="106"/>
    </location>
    <ligand>
        <name>shikimate</name>
        <dbReference type="ChEBI" id="CHEBI:36208"/>
    </ligand>
</feature>
<feature type="binding site" evidence="1">
    <location>
        <begin position="130"/>
        <end position="134"/>
    </location>
    <ligand>
        <name>NADP(+)</name>
        <dbReference type="ChEBI" id="CHEBI:58349"/>
    </ligand>
</feature>
<feature type="binding site" evidence="1">
    <location>
        <position position="222"/>
    </location>
    <ligand>
        <name>NADP(+)</name>
        <dbReference type="ChEBI" id="CHEBI:58349"/>
    </ligand>
</feature>
<feature type="binding site" evidence="1">
    <location>
        <position position="224"/>
    </location>
    <ligand>
        <name>shikimate</name>
        <dbReference type="ChEBI" id="CHEBI:36208"/>
    </ligand>
</feature>
<feature type="binding site" evidence="1">
    <location>
        <position position="245"/>
    </location>
    <ligand>
        <name>NADP(+)</name>
        <dbReference type="ChEBI" id="CHEBI:58349"/>
    </ligand>
</feature>
<dbReference type="EC" id="1.1.1.25" evidence="1"/>
<dbReference type="EMBL" id="CP000867">
    <property type="protein sequence ID" value="ABX02531.1"/>
    <property type="molecule type" value="Genomic_DNA"/>
</dbReference>
<dbReference type="SMR" id="A9AB08"/>
<dbReference type="STRING" id="444158.MmarC6_1719"/>
<dbReference type="KEGG" id="mmx:MmarC6_1719"/>
<dbReference type="eggNOG" id="arCOG01033">
    <property type="taxonomic scope" value="Archaea"/>
</dbReference>
<dbReference type="HOGENOM" id="CLU_044063_4_1_2"/>
<dbReference type="OrthoDB" id="8744at2157"/>
<dbReference type="PhylomeDB" id="A9AB08"/>
<dbReference type="UniPathway" id="UPA00053">
    <property type="reaction ID" value="UER00087"/>
</dbReference>
<dbReference type="GO" id="GO:0050661">
    <property type="term" value="F:NADP binding"/>
    <property type="evidence" value="ECO:0007669"/>
    <property type="project" value="InterPro"/>
</dbReference>
<dbReference type="GO" id="GO:0004764">
    <property type="term" value="F:shikimate 3-dehydrogenase (NADP+) activity"/>
    <property type="evidence" value="ECO:0007669"/>
    <property type="project" value="UniProtKB-UniRule"/>
</dbReference>
<dbReference type="GO" id="GO:0008652">
    <property type="term" value="P:amino acid biosynthetic process"/>
    <property type="evidence" value="ECO:0007669"/>
    <property type="project" value="UniProtKB-KW"/>
</dbReference>
<dbReference type="GO" id="GO:0009073">
    <property type="term" value="P:aromatic amino acid family biosynthetic process"/>
    <property type="evidence" value="ECO:0007669"/>
    <property type="project" value="UniProtKB-KW"/>
</dbReference>
<dbReference type="GO" id="GO:0009423">
    <property type="term" value="P:chorismate biosynthetic process"/>
    <property type="evidence" value="ECO:0007669"/>
    <property type="project" value="UniProtKB-UniRule"/>
</dbReference>
<dbReference type="GO" id="GO:0019632">
    <property type="term" value="P:shikimate metabolic process"/>
    <property type="evidence" value="ECO:0007669"/>
    <property type="project" value="InterPro"/>
</dbReference>
<dbReference type="CDD" id="cd01065">
    <property type="entry name" value="NAD_bind_Shikimate_DH"/>
    <property type="match status" value="1"/>
</dbReference>
<dbReference type="FunFam" id="3.40.50.10860:FF:000004">
    <property type="entry name" value="Quinate/shikimate dehydrogenase"/>
    <property type="match status" value="1"/>
</dbReference>
<dbReference type="Gene3D" id="3.40.50.10860">
    <property type="entry name" value="Leucine Dehydrogenase, chain A, domain 1"/>
    <property type="match status" value="1"/>
</dbReference>
<dbReference type="Gene3D" id="3.40.50.720">
    <property type="entry name" value="NAD(P)-binding Rossmann-like Domain"/>
    <property type="match status" value="1"/>
</dbReference>
<dbReference type="HAMAP" id="MF_00222">
    <property type="entry name" value="Shikimate_DH_AroE"/>
    <property type="match status" value="1"/>
</dbReference>
<dbReference type="InterPro" id="IPR046346">
    <property type="entry name" value="Aminoacid_DH-like_N_sf"/>
</dbReference>
<dbReference type="InterPro" id="IPR036291">
    <property type="entry name" value="NAD(P)-bd_dom_sf"/>
</dbReference>
<dbReference type="InterPro" id="IPR041121">
    <property type="entry name" value="SDH_C"/>
</dbReference>
<dbReference type="InterPro" id="IPR011342">
    <property type="entry name" value="Shikimate_DH"/>
</dbReference>
<dbReference type="InterPro" id="IPR013708">
    <property type="entry name" value="Shikimate_DH-bd_N"/>
</dbReference>
<dbReference type="InterPro" id="IPR022893">
    <property type="entry name" value="Shikimate_DH_fam"/>
</dbReference>
<dbReference type="InterPro" id="IPR006151">
    <property type="entry name" value="Shikm_DH/Glu-tRNA_Rdtase"/>
</dbReference>
<dbReference type="NCBIfam" id="TIGR00507">
    <property type="entry name" value="aroE"/>
    <property type="match status" value="1"/>
</dbReference>
<dbReference type="NCBIfam" id="NF001314">
    <property type="entry name" value="PRK00258.2-2"/>
    <property type="match status" value="1"/>
</dbReference>
<dbReference type="NCBIfam" id="NF001319">
    <property type="entry name" value="PRK00258.3-3"/>
    <property type="match status" value="1"/>
</dbReference>
<dbReference type="PANTHER" id="PTHR21089:SF1">
    <property type="entry name" value="BIFUNCTIONAL 3-DEHYDROQUINATE DEHYDRATASE_SHIKIMATE DEHYDROGENASE, CHLOROPLASTIC"/>
    <property type="match status" value="1"/>
</dbReference>
<dbReference type="PANTHER" id="PTHR21089">
    <property type="entry name" value="SHIKIMATE DEHYDROGENASE"/>
    <property type="match status" value="1"/>
</dbReference>
<dbReference type="Pfam" id="PF18317">
    <property type="entry name" value="SDH_C"/>
    <property type="match status" value="1"/>
</dbReference>
<dbReference type="Pfam" id="PF01488">
    <property type="entry name" value="Shikimate_DH"/>
    <property type="match status" value="1"/>
</dbReference>
<dbReference type="Pfam" id="PF08501">
    <property type="entry name" value="Shikimate_dh_N"/>
    <property type="match status" value="1"/>
</dbReference>
<dbReference type="SUPFAM" id="SSF53223">
    <property type="entry name" value="Aminoacid dehydrogenase-like, N-terminal domain"/>
    <property type="match status" value="1"/>
</dbReference>
<dbReference type="SUPFAM" id="SSF51735">
    <property type="entry name" value="NAD(P)-binding Rossmann-fold domains"/>
    <property type="match status" value="1"/>
</dbReference>
<sequence length="279" mass="30728">MIDSKTKLIGLIGHPVEHSFSPIMHNAAIKDLGINYTYLAFDVSEENLKYIVSGAKALQIAGFNVTIPHKINIMKYLDEIDEDAKSIGAVNTVKIENGKTIGYNTDGIGVKRALEEKSGILINKNILIIGSGGASRAVSFELAKENNLTIVNRNIEKAKILSEELSTKLKKENSIKYGALNIDIKNFDIIINTTPVGMYPDTDVNPVIPLNDIKKSAVVMDLIYNPLEPVFLKEAMKYGVETINGLGMLVYQGAVSFQIWTGKKPDVYVMKKAINSKIR</sequence>
<proteinExistence type="inferred from homology"/>
<reference key="1">
    <citation type="submission" date="2007-10" db="EMBL/GenBank/DDBJ databases">
        <title>Complete sequence of Methanococcus maripaludis C6.</title>
        <authorList>
            <consortium name="US DOE Joint Genome Institute"/>
            <person name="Copeland A."/>
            <person name="Lucas S."/>
            <person name="Lapidus A."/>
            <person name="Barry K."/>
            <person name="Glavina del Rio T."/>
            <person name="Dalin E."/>
            <person name="Tice H."/>
            <person name="Pitluck S."/>
            <person name="Clum A."/>
            <person name="Schmutz J."/>
            <person name="Larimer F."/>
            <person name="Land M."/>
            <person name="Hauser L."/>
            <person name="Kyrpides N."/>
            <person name="Mikhailova N."/>
            <person name="Sieprawska-Lupa M."/>
            <person name="Whitman W.B."/>
            <person name="Richardson P."/>
        </authorList>
    </citation>
    <scope>NUCLEOTIDE SEQUENCE [LARGE SCALE GENOMIC DNA]</scope>
    <source>
        <strain>C6 / ATCC BAA-1332</strain>
    </source>
</reference>